<reference key="1">
    <citation type="journal article" date="2011" name="J. Bacteriol.">
        <title>Comparative genomics of 28 Salmonella enterica isolates: evidence for CRISPR-mediated adaptive sublineage evolution.</title>
        <authorList>
            <person name="Fricke W.F."/>
            <person name="Mammel M.K."/>
            <person name="McDermott P.F."/>
            <person name="Tartera C."/>
            <person name="White D.G."/>
            <person name="Leclerc J.E."/>
            <person name="Ravel J."/>
            <person name="Cebula T.A."/>
        </authorList>
    </citation>
    <scope>NUCLEOTIDE SEQUENCE [LARGE SCALE GENOMIC DNA]</scope>
    <source>
        <strain>SL476</strain>
    </source>
</reference>
<proteinExistence type="inferred from homology"/>
<accession>B4TB13</accession>
<evidence type="ECO:0000255" key="1">
    <source>
        <dbReference type="HAMAP-Rule" id="MF_00661"/>
    </source>
</evidence>
<evidence type="ECO:0000256" key="2">
    <source>
        <dbReference type="SAM" id="MobiDB-lite"/>
    </source>
</evidence>
<dbReference type="EC" id="3.6.4.13" evidence="1"/>
<dbReference type="EMBL" id="CP001120">
    <property type="protein sequence ID" value="ACF67550.1"/>
    <property type="molecule type" value="Genomic_DNA"/>
</dbReference>
<dbReference type="RefSeq" id="WP_000047525.1">
    <property type="nucleotide sequence ID" value="NC_011083.1"/>
</dbReference>
<dbReference type="SMR" id="B4TB13"/>
<dbReference type="KEGG" id="seh:SeHA_C4244"/>
<dbReference type="HOGENOM" id="CLU_003041_1_3_6"/>
<dbReference type="Proteomes" id="UP000001866">
    <property type="component" value="Chromosome"/>
</dbReference>
<dbReference type="GO" id="GO:0005829">
    <property type="term" value="C:cytosol"/>
    <property type="evidence" value="ECO:0007669"/>
    <property type="project" value="TreeGrafter"/>
</dbReference>
<dbReference type="GO" id="GO:0005524">
    <property type="term" value="F:ATP binding"/>
    <property type="evidence" value="ECO:0007669"/>
    <property type="project" value="UniProtKB-UniRule"/>
</dbReference>
<dbReference type="GO" id="GO:0016887">
    <property type="term" value="F:ATP hydrolysis activity"/>
    <property type="evidence" value="ECO:0007669"/>
    <property type="project" value="RHEA"/>
</dbReference>
<dbReference type="GO" id="GO:0003723">
    <property type="term" value="F:RNA binding"/>
    <property type="evidence" value="ECO:0007669"/>
    <property type="project" value="UniProtKB-UniRule"/>
</dbReference>
<dbReference type="GO" id="GO:0003724">
    <property type="term" value="F:RNA helicase activity"/>
    <property type="evidence" value="ECO:0007669"/>
    <property type="project" value="UniProtKB-UniRule"/>
</dbReference>
<dbReference type="GO" id="GO:0006401">
    <property type="term" value="P:RNA catabolic process"/>
    <property type="evidence" value="ECO:0007669"/>
    <property type="project" value="UniProtKB-UniRule"/>
</dbReference>
<dbReference type="CDD" id="cd00268">
    <property type="entry name" value="DEADc"/>
    <property type="match status" value="1"/>
</dbReference>
<dbReference type="CDD" id="cd18787">
    <property type="entry name" value="SF2_C_DEAD"/>
    <property type="match status" value="1"/>
</dbReference>
<dbReference type="FunFam" id="3.40.50.300:FF:000008">
    <property type="entry name" value="ATP-dependent RNA helicase RhlB"/>
    <property type="match status" value="1"/>
</dbReference>
<dbReference type="FunFam" id="3.40.50.300:FF:000312">
    <property type="entry name" value="ATP-dependent RNA helicase RhlB"/>
    <property type="match status" value="1"/>
</dbReference>
<dbReference type="Gene3D" id="3.40.50.300">
    <property type="entry name" value="P-loop containing nucleotide triphosphate hydrolases"/>
    <property type="match status" value="2"/>
</dbReference>
<dbReference type="HAMAP" id="MF_00661">
    <property type="entry name" value="DEAD_helicase_RhlB"/>
    <property type="match status" value="1"/>
</dbReference>
<dbReference type="InterPro" id="IPR011545">
    <property type="entry name" value="DEAD/DEAH_box_helicase_dom"/>
</dbReference>
<dbReference type="InterPro" id="IPR050079">
    <property type="entry name" value="DEAD_box_RNA_helicase"/>
</dbReference>
<dbReference type="InterPro" id="IPR014001">
    <property type="entry name" value="Helicase_ATP-bd"/>
</dbReference>
<dbReference type="InterPro" id="IPR001650">
    <property type="entry name" value="Helicase_C-like"/>
</dbReference>
<dbReference type="InterPro" id="IPR027417">
    <property type="entry name" value="P-loop_NTPase"/>
</dbReference>
<dbReference type="InterPro" id="IPR000629">
    <property type="entry name" value="RNA-helicase_DEAD-box_CS"/>
</dbReference>
<dbReference type="InterPro" id="IPR023554">
    <property type="entry name" value="RNA_helicase_ATP-dep_RhlB"/>
</dbReference>
<dbReference type="InterPro" id="IPR014014">
    <property type="entry name" value="RNA_helicase_DEAD_Q_motif"/>
</dbReference>
<dbReference type="NCBIfam" id="NF003419">
    <property type="entry name" value="PRK04837.1"/>
    <property type="match status" value="1"/>
</dbReference>
<dbReference type="PANTHER" id="PTHR47959:SF10">
    <property type="entry name" value="ATP-DEPENDENT RNA HELICASE RHLB"/>
    <property type="match status" value="1"/>
</dbReference>
<dbReference type="PANTHER" id="PTHR47959">
    <property type="entry name" value="ATP-DEPENDENT RNA HELICASE RHLE-RELATED"/>
    <property type="match status" value="1"/>
</dbReference>
<dbReference type="Pfam" id="PF00270">
    <property type="entry name" value="DEAD"/>
    <property type="match status" value="1"/>
</dbReference>
<dbReference type="Pfam" id="PF00271">
    <property type="entry name" value="Helicase_C"/>
    <property type="match status" value="1"/>
</dbReference>
<dbReference type="SMART" id="SM00487">
    <property type="entry name" value="DEXDc"/>
    <property type="match status" value="1"/>
</dbReference>
<dbReference type="SMART" id="SM00490">
    <property type="entry name" value="HELICc"/>
    <property type="match status" value="1"/>
</dbReference>
<dbReference type="SUPFAM" id="SSF52540">
    <property type="entry name" value="P-loop containing nucleoside triphosphate hydrolases"/>
    <property type="match status" value="1"/>
</dbReference>
<dbReference type="PROSITE" id="PS00039">
    <property type="entry name" value="DEAD_ATP_HELICASE"/>
    <property type="match status" value="1"/>
</dbReference>
<dbReference type="PROSITE" id="PS51192">
    <property type="entry name" value="HELICASE_ATP_BIND_1"/>
    <property type="match status" value="1"/>
</dbReference>
<dbReference type="PROSITE" id="PS51194">
    <property type="entry name" value="HELICASE_CTER"/>
    <property type="match status" value="1"/>
</dbReference>
<dbReference type="PROSITE" id="PS51195">
    <property type="entry name" value="Q_MOTIF"/>
    <property type="match status" value="1"/>
</dbReference>
<protein>
    <recommendedName>
        <fullName evidence="1">ATP-dependent RNA helicase RhlB</fullName>
        <ecNumber evidence="1">3.6.4.13</ecNumber>
    </recommendedName>
</protein>
<keyword id="KW-0067">ATP-binding</keyword>
<keyword id="KW-0963">Cytoplasm</keyword>
<keyword id="KW-0347">Helicase</keyword>
<keyword id="KW-0378">Hydrolase</keyword>
<keyword id="KW-0547">Nucleotide-binding</keyword>
<keyword id="KW-0694">RNA-binding</keyword>
<sequence length="421" mass="47093">MSKTHLTEQKFSDFALHPQVVEALEKKGFYNCTPIQALALPLTLAGRDVAGQAQTGTGKTMAFLTSTFHYLLSHPAIDDRKVNQPRALIMAPTRELAVQIHADAEPLAQATGLKLGLAYGGDGYDKQLKVLESGVDILIGTTGRLIDYAKQNHINLGAIQVVVLDEADRMYDLGFIKDIRWLFRRMPPAAQRLNMLFSATLSYRVRELAFEQMNNAEYVEVEPEQKTGHRIKEELFYPSNEEKMRLLQTLIEEEWPDRAIIFANTKHRCEDIWGHLAADGHRVGLLTGDVAQKKRLRILDEFTRGDLDILVATDVAARGLHIPAVTHVFNYDLPDDCEDYVHRIGRTGRAGASGHSISLACEEYALNLPAIESYIGHSIPVSKYNPEALMNDLPKPLRLTRSRPGNGPRRAGAPRNRRRSG</sequence>
<organism>
    <name type="scientific">Salmonella heidelberg (strain SL476)</name>
    <dbReference type="NCBI Taxonomy" id="454169"/>
    <lineage>
        <taxon>Bacteria</taxon>
        <taxon>Pseudomonadati</taxon>
        <taxon>Pseudomonadota</taxon>
        <taxon>Gammaproteobacteria</taxon>
        <taxon>Enterobacterales</taxon>
        <taxon>Enterobacteriaceae</taxon>
        <taxon>Salmonella</taxon>
    </lineage>
</organism>
<name>RHLB_SALHS</name>
<gene>
    <name evidence="1" type="primary">rhlB</name>
    <name type="ordered locus">SeHA_C4244</name>
</gene>
<comment type="function">
    <text evidence="1">DEAD-box RNA helicase involved in RNA degradation. Has RNA-dependent ATPase activity and unwinds double-stranded RNA.</text>
</comment>
<comment type="catalytic activity">
    <reaction evidence="1">
        <text>ATP + H2O = ADP + phosphate + H(+)</text>
        <dbReference type="Rhea" id="RHEA:13065"/>
        <dbReference type="ChEBI" id="CHEBI:15377"/>
        <dbReference type="ChEBI" id="CHEBI:15378"/>
        <dbReference type="ChEBI" id="CHEBI:30616"/>
        <dbReference type="ChEBI" id="CHEBI:43474"/>
        <dbReference type="ChEBI" id="CHEBI:456216"/>
        <dbReference type="EC" id="3.6.4.13"/>
    </reaction>
</comment>
<comment type="subunit">
    <text evidence="1">Component of the RNA degradosome, which is a multiprotein complex involved in RNA processing and mRNA degradation.</text>
</comment>
<comment type="subcellular location">
    <subcellularLocation>
        <location evidence="1">Cytoplasm</location>
    </subcellularLocation>
</comment>
<comment type="similarity">
    <text evidence="1">Belongs to the DEAD box helicase family. RhlB subfamily.</text>
</comment>
<feature type="chain" id="PRO_1000131304" description="ATP-dependent RNA helicase RhlB">
    <location>
        <begin position="1"/>
        <end position="421"/>
    </location>
</feature>
<feature type="domain" description="Helicase ATP-binding" evidence="1">
    <location>
        <begin position="40"/>
        <end position="219"/>
    </location>
</feature>
<feature type="domain" description="Helicase C-terminal" evidence="1">
    <location>
        <begin position="245"/>
        <end position="390"/>
    </location>
</feature>
<feature type="region of interest" description="Disordered" evidence="2">
    <location>
        <begin position="396"/>
        <end position="421"/>
    </location>
</feature>
<feature type="short sequence motif" description="Q motif">
    <location>
        <begin position="9"/>
        <end position="37"/>
    </location>
</feature>
<feature type="short sequence motif" description="DEAD box">
    <location>
        <begin position="165"/>
        <end position="168"/>
    </location>
</feature>
<feature type="compositionally biased region" description="Low complexity" evidence="2">
    <location>
        <begin position="402"/>
        <end position="414"/>
    </location>
</feature>
<feature type="binding site" evidence="1">
    <location>
        <begin position="53"/>
        <end position="60"/>
    </location>
    <ligand>
        <name>ATP</name>
        <dbReference type="ChEBI" id="CHEBI:30616"/>
    </ligand>
</feature>